<reference key="1">
    <citation type="journal article" date="2002" name="Proc. Natl. Acad. Sci. U.S.A.">
        <title>The Brucella suis genome reveals fundamental similarities between animal and plant pathogens and symbionts.</title>
        <authorList>
            <person name="Paulsen I.T."/>
            <person name="Seshadri R."/>
            <person name="Nelson K.E."/>
            <person name="Eisen J.A."/>
            <person name="Heidelberg J.F."/>
            <person name="Read T.D."/>
            <person name="Dodson R.J."/>
            <person name="Umayam L.A."/>
            <person name="Brinkac L.M."/>
            <person name="Beanan M.J."/>
            <person name="Daugherty S.C."/>
            <person name="DeBoy R.T."/>
            <person name="Durkin A.S."/>
            <person name="Kolonay J.F."/>
            <person name="Madupu R."/>
            <person name="Nelson W.C."/>
            <person name="Ayodeji B."/>
            <person name="Kraul M."/>
            <person name="Shetty J."/>
            <person name="Malek J.A."/>
            <person name="Van Aken S.E."/>
            <person name="Riedmuller S."/>
            <person name="Tettelin H."/>
            <person name="Gill S.R."/>
            <person name="White O."/>
            <person name="Salzberg S.L."/>
            <person name="Hoover D.L."/>
            <person name="Lindler L.E."/>
            <person name="Halling S.M."/>
            <person name="Boyle S.M."/>
            <person name="Fraser C.M."/>
        </authorList>
    </citation>
    <scope>NUCLEOTIDE SEQUENCE [LARGE SCALE GENOMIC DNA]</scope>
    <source>
        <strain>1330</strain>
    </source>
</reference>
<reference key="2">
    <citation type="journal article" date="2011" name="J. Bacteriol.">
        <title>Revised genome sequence of Brucella suis 1330.</title>
        <authorList>
            <person name="Tae H."/>
            <person name="Shallom S."/>
            <person name="Settlage R."/>
            <person name="Preston D."/>
            <person name="Adams L.G."/>
            <person name="Garner H.R."/>
        </authorList>
    </citation>
    <scope>NUCLEOTIDE SEQUENCE [LARGE SCALE GENOMIC DNA]</scope>
    <source>
        <strain>1330</strain>
    </source>
</reference>
<protein>
    <recommendedName>
        <fullName evidence="1">Dihydroxy-acid dehydratase</fullName>
        <shortName evidence="1">DAD</shortName>
        <ecNumber evidence="1">4.2.1.9</ecNumber>
    </recommendedName>
</protein>
<proteinExistence type="inferred from homology"/>
<name>ILVD_BRUSU</name>
<comment type="function">
    <text evidence="1">Functions in the biosynthesis of branched-chain amino acids. Catalyzes the dehydration of (2R,3R)-2,3-dihydroxy-3-methylpentanoate (2,3-dihydroxy-3-methylvalerate) into 2-oxo-3-methylpentanoate (2-oxo-3-methylvalerate) and of (2R)-2,3-dihydroxy-3-methylbutanoate (2,3-dihydroxyisovalerate) into 2-oxo-3-methylbutanoate (2-oxoisovalerate), the penultimate precursor to L-isoleucine and L-valine, respectively.</text>
</comment>
<comment type="catalytic activity">
    <reaction evidence="1">
        <text>(2R)-2,3-dihydroxy-3-methylbutanoate = 3-methyl-2-oxobutanoate + H2O</text>
        <dbReference type="Rhea" id="RHEA:24809"/>
        <dbReference type="ChEBI" id="CHEBI:11851"/>
        <dbReference type="ChEBI" id="CHEBI:15377"/>
        <dbReference type="ChEBI" id="CHEBI:49072"/>
        <dbReference type="EC" id="4.2.1.9"/>
    </reaction>
    <physiologicalReaction direction="left-to-right" evidence="1">
        <dbReference type="Rhea" id="RHEA:24810"/>
    </physiologicalReaction>
</comment>
<comment type="catalytic activity">
    <reaction evidence="1">
        <text>(2R,3R)-2,3-dihydroxy-3-methylpentanoate = (S)-3-methyl-2-oxopentanoate + H2O</text>
        <dbReference type="Rhea" id="RHEA:27694"/>
        <dbReference type="ChEBI" id="CHEBI:15377"/>
        <dbReference type="ChEBI" id="CHEBI:35146"/>
        <dbReference type="ChEBI" id="CHEBI:49258"/>
        <dbReference type="EC" id="4.2.1.9"/>
    </reaction>
    <physiologicalReaction direction="left-to-right" evidence="1">
        <dbReference type="Rhea" id="RHEA:27695"/>
    </physiologicalReaction>
</comment>
<comment type="cofactor">
    <cofactor evidence="1">
        <name>[2Fe-2S] cluster</name>
        <dbReference type="ChEBI" id="CHEBI:190135"/>
    </cofactor>
    <text evidence="1">Binds 1 [2Fe-2S] cluster per subunit. This cluster acts as a Lewis acid cofactor.</text>
</comment>
<comment type="cofactor">
    <cofactor evidence="1">
        <name>Mg(2+)</name>
        <dbReference type="ChEBI" id="CHEBI:18420"/>
    </cofactor>
</comment>
<comment type="pathway">
    <text evidence="1">Amino-acid biosynthesis; L-isoleucine biosynthesis; L-isoleucine from 2-oxobutanoate: step 3/4.</text>
</comment>
<comment type="pathway">
    <text evidence="1">Amino-acid biosynthesis; L-valine biosynthesis; L-valine from pyruvate: step 3/4.</text>
</comment>
<comment type="subunit">
    <text evidence="1">Homodimer.</text>
</comment>
<comment type="similarity">
    <text evidence="1">Belongs to the IlvD/Edd family.</text>
</comment>
<sequence length="611" mass="65344">MPPYRSRTTTHGRNMAGARGLWRATGMKDEDFGKPIIAVVNSFTQFVPGHVHLKDLGQLVAREIESAGGVAKEFNTIAVDDGIAMGHDGMLYSLPSRELIADSVEYMVNAHCADAMVCISNCDKITPGMLMAALRLNIPVVFVSGGPMEAGKVVWEDSVKKLDLVDAMVAAADDHYTDEQVKAIERSACPTCGSCSGMFTANSMNCLTEALGLSLPGNGSTLATHADRKRLFVEAGHLIVDLARRYYEQDDESVLPRSIATFSAFENAMTLDIAMGGSTNTVLHLLAAAQEAEIDFTMADIDRLSRRVPVLCKVAPAVSSVHMEDVHHAGGIMGILGQLDNAGLLTTSIPTVHSETLAKALDHWDVTRTNSEMVHKFYSAAPGGVPTQVAFSQERRFDKVDTDREKGVIRSKEHAFSQDGGLAVLYGNLAEDGCIVKTAGVDDSILKFSGPARIFESQDSAVLGILNGKIKPGDIVLIRYEGPRGGPGMQEMLYPTSYLKSKGFGKACALITDGRFSGGSSGLSIGHVSPEAAEGGTIGLVREGDIIDIDIPNRKIHLAVDDATLAERRAEQDAAGWKPAEERKRKISTALKAYAAMATSAARGAVRKLPD</sequence>
<evidence type="ECO:0000255" key="1">
    <source>
        <dbReference type="HAMAP-Rule" id="MF_00012"/>
    </source>
</evidence>
<organism>
    <name type="scientific">Brucella suis biovar 1 (strain 1330)</name>
    <dbReference type="NCBI Taxonomy" id="204722"/>
    <lineage>
        <taxon>Bacteria</taxon>
        <taxon>Pseudomonadati</taxon>
        <taxon>Pseudomonadota</taxon>
        <taxon>Alphaproteobacteria</taxon>
        <taxon>Hyphomicrobiales</taxon>
        <taxon>Brucellaceae</taxon>
        <taxon>Brucella/Ochrobactrum group</taxon>
        <taxon>Brucella</taxon>
    </lineage>
</organism>
<gene>
    <name evidence="1" type="primary">ilvD</name>
    <name type="ordered locus">BR0099</name>
    <name type="ordered locus">BS1330_I0099</name>
</gene>
<feature type="chain" id="PRO_0000103445" description="Dihydroxy-acid dehydratase">
    <location>
        <begin position="1"/>
        <end position="611"/>
    </location>
</feature>
<feature type="active site" description="Proton acceptor" evidence="1">
    <location>
        <position position="517"/>
    </location>
</feature>
<feature type="binding site" evidence="1">
    <location>
        <position position="81"/>
    </location>
    <ligand>
        <name>Mg(2+)</name>
        <dbReference type="ChEBI" id="CHEBI:18420"/>
    </ligand>
</feature>
<feature type="binding site" evidence="1">
    <location>
        <position position="122"/>
    </location>
    <ligand>
        <name>[2Fe-2S] cluster</name>
        <dbReference type="ChEBI" id="CHEBI:190135"/>
    </ligand>
</feature>
<feature type="binding site" evidence="1">
    <location>
        <position position="123"/>
    </location>
    <ligand>
        <name>Mg(2+)</name>
        <dbReference type="ChEBI" id="CHEBI:18420"/>
    </ligand>
</feature>
<feature type="binding site" description="via carbamate group" evidence="1">
    <location>
        <position position="124"/>
    </location>
    <ligand>
        <name>Mg(2+)</name>
        <dbReference type="ChEBI" id="CHEBI:18420"/>
    </ligand>
</feature>
<feature type="binding site" evidence="1">
    <location>
        <position position="195"/>
    </location>
    <ligand>
        <name>[2Fe-2S] cluster</name>
        <dbReference type="ChEBI" id="CHEBI:190135"/>
    </ligand>
</feature>
<feature type="binding site" evidence="1">
    <location>
        <position position="491"/>
    </location>
    <ligand>
        <name>Mg(2+)</name>
        <dbReference type="ChEBI" id="CHEBI:18420"/>
    </ligand>
</feature>
<feature type="modified residue" description="N6-carboxylysine" evidence="1">
    <location>
        <position position="124"/>
    </location>
</feature>
<keyword id="KW-0001">2Fe-2S</keyword>
<keyword id="KW-0028">Amino-acid biosynthesis</keyword>
<keyword id="KW-0100">Branched-chain amino acid biosynthesis</keyword>
<keyword id="KW-0408">Iron</keyword>
<keyword id="KW-0411">Iron-sulfur</keyword>
<keyword id="KW-0456">Lyase</keyword>
<keyword id="KW-0460">Magnesium</keyword>
<keyword id="KW-0479">Metal-binding</keyword>
<accession>Q8G353</accession>
<accession>G0KAZ6</accession>
<dbReference type="EC" id="4.2.1.9" evidence="1"/>
<dbReference type="EMBL" id="AE014291">
    <property type="protein sequence ID" value="AAN29055.1"/>
    <property type="molecule type" value="Genomic_DNA"/>
</dbReference>
<dbReference type="EMBL" id="CP002997">
    <property type="protein sequence ID" value="AEM17467.1"/>
    <property type="molecule type" value="Genomic_DNA"/>
</dbReference>
<dbReference type="RefSeq" id="WP_004691283.1">
    <property type="nucleotide sequence ID" value="NZ_KN046804.1"/>
</dbReference>
<dbReference type="SMR" id="Q8G353"/>
<dbReference type="GeneID" id="55589896"/>
<dbReference type="KEGG" id="bms:BR0099"/>
<dbReference type="KEGG" id="bsi:BS1330_I0099"/>
<dbReference type="PATRIC" id="fig|204722.21.peg.1563"/>
<dbReference type="HOGENOM" id="CLU_014271_4_2_5"/>
<dbReference type="PhylomeDB" id="Q8G353"/>
<dbReference type="UniPathway" id="UPA00047">
    <property type="reaction ID" value="UER00057"/>
</dbReference>
<dbReference type="UniPathway" id="UPA00049">
    <property type="reaction ID" value="UER00061"/>
</dbReference>
<dbReference type="PRO" id="PR:Q8G353"/>
<dbReference type="Proteomes" id="UP000007104">
    <property type="component" value="Chromosome I"/>
</dbReference>
<dbReference type="GO" id="GO:0005829">
    <property type="term" value="C:cytosol"/>
    <property type="evidence" value="ECO:0007669"/>
    <property type="project" value="TreeGrafter"/>
</dbReference>
<dbReference type="GO" id="GO:0051537">
    <property type="term" value="F:2 iron, 2 sulfur cluster binding"/>
    <property type="evidence" value="ECO:0007669"/>
    <property type="project" value="UniProtKB-UniRule"/>
</dbReference>
<dbReference type="GO" id="GO:0004160">
    <property type="term" value="F:dihydroxy-acid dehydratase activity"/>
    <property type="evidence" value="ECO:0007669"/>
    <property type="project" value="UniProtKB-UniRule"/>
</dbReference>
<dbReference type="GO" id="GO:0000287">
    <property type="term" value="F:magnesium ion binding"/>
    <property type="evidence" value="ECO:0007669"/>
    <property type="project" value="UniProtKB-UniRule"/>
</dbReference>
<dbReference type="GO" id="GO:0009097">
    <property type="term" value="P:isoleucine biosynthetic process"/>
    <property type="evidence" value="ECO:0007669"/>
    <property type="project" value="UniProtKB-UniRule"/>
</dbReference>
<dbReference type="GO" id="GO:0009099">
    <property type="term" value="P:L-valine biosynthetic process"/>
    <property type="evidence" value="ECO:0007669"/>
    <property type="project" value="UniProtKB-UniRule"/>
</dbReference>
<dbReference type="FunFam" id="3.50.30.80:FF:000001">
    <property type="entry name" value="Dihydroxy-acid dehydratase"/>
    <property type="match status" value="1"/>
</dbReference>
<dbReference type="Gene3D" id="3.50.30.80">
    <property type="entry name" value="IlvD/EDD C-terminal domain-like"/>
    <property type="match status" value="1"/>
</dbReference>
<dbReference type="HAMAP" id="MF_00012">
    <property type="entry name" value="IlvD"/>
    <property type="match status" value="1"/>
</dbReference>
<dbReference type="InterPro" id="IPR042096">
    <property type="entry name" value="Dihydro-acid_dehy_C"/>
</dbReference>
<dbReference type="InterPro" id="IPR004404">
    <property type="entry name" value="DihydroxyA_deHydtase"/>
</dbReference>
<dbReference type="InterPro" id="IPR020558">
    <property type="entry name" value="DiOHA_6PGluconate_deHydtase_CS"/>
</dbReference>
<dbReference type="InterPro" id="IPR056740">
    <property type="entry name" value="ILV_EDD_C"/>
</dbReference>
<dbReference type="InterPro" id="IPR000581">
    <property type="entry name" value="ILV_EDD_N"/>
</dbReference>
<dbReference type="InterPro" id="IPR037237">
    <property type="entry name" value="IlvD/EDD_N"/>
</dbReference>
<dbReference type="NCBIfam" id="TIGR00110">
    <property type="entry name" value="ilvD"/>
    <property type="match status" value="1"/>
</dbReference>
<dbReference type="NCBIfam" id="NF009103">
    <property type="entry name" value="PRK12448.1"/>
    <property type="match status" value="1"/>
</dbReference>
<dbReference type="PANTHER" id="PTHR43661">
    <property type="entry name" value="D-XYLONATE DEHYDRATASE"/>
    <property type="match status" value="1"/>
</dbReference>
<dbReference type="PANTHER" id="PTHR43661:SF3">
    <property type="entry name" value="D-XYLONATE DEHYDRATASE YAGF-RELATED"/>
    <property type="match status" value="1"/>
</dbReference>
<dbReference type="Pfam" id="PF24877">
    <property type="entry name" value="ILV_EDD_C"/>
    <property type="match status" value="1"/>
</dbReference>
<dbReference type="Pfam" id="PF00920">
    <property type="entry name" value="ILVD_EDD_N"/>
    <property type="match status" value="1"/>
</dbReference>
<dbReference type="SUPFAM" id="SSF143975">
    <property type="entry name" value="IlvD/EDD N-terminal domain-like"/>
    <property type="match status" value="1"/>
</dbReference>
<dbReference type="SUPFAM" id="SSF52016">
    <property type="entry name" value="LeuD/IlvD-like"/>
    <property type="match status" value="1"/>
</dbReference>
<dbReference type="PROSITE" id="PS00886">
    <property type="entry name" value="ILVD_EDD_1"/>
    <property type="match status" value="1"/>
</dbReference>
<dbReference type="PROSITE" id="PS00887">
    <property type="entry name" value="ILVD_EDD_2"/>
    <property type="match status" value="1"/>
</dbReference>